<name>PYRH_PEDPA</name>
<reference key="1">
    <citation type="journal article" date="2006" name="Proc. Natl. Acad. Sci. U.S.A.">
        <title>Comparative genomics of the lactic acid bacteria.</title>
        <authorList>
            <person name="Makarova K.S."/>
            <person name="Slesarev A."/>
            <person name="Wolf Y.I."/>
            <person name="Sorokin A."/>
            <person name="Mirkin B."/>
            <person name="Koonin E.V."/>
            <person name="Pavlov A."/>
            <person name="Pavlova N."/>
            <person name="Karamychev V."/>
            <person name="Polouchine N."/>
            <person name="Shakhova V."/>
            <person name="Grigoriev I."/>
            <person name="Lou Y."/>
            <person name="Rohksar D."/>
            <person name="Lucas S."/>
            <person name="Huang K."/>
            <person name="Goodstein D.M."/>
            <person name="Hawkins T."/>
            <person name="Plengvidhya V."/>
            <person name="Welker D."/>
            <person name="Hughes J."/>
            <person name="Goh Y."/>
            <person name="Benson A."/>
            <person name="Baldwin K."/>
            <person name="Lee J.-H."/>
            <person name="Diaz-Muniz I."/>
            <person name="Dosti B."/>
            <person name="Smeianov V."/>
            <person name="Wechter W."/>
            <person name="Barabote R."/>
            <person name="Lorca G."/>
            <person name="Altermann E."/>
            <person name="Barrangou R."/>
            <person name="Ganesan B."/>
            <person name="Xie Y."/>
            <person name="Rawsthorne H."/>
            <person name="Tamir D."/>
            <person name="Parker C."/>
            <person name="Breidt F."/>
            <person name="Broadbent J.R."/>
            <person name="Hutkins R."/>
            <person name="O'Sullivan D."/>
            <person name="Steele J."/>
            <person name="Unlu G."/>
            <person name="Saier M.H. Jr."/>
            <person name="Klaenhammer T."/>
            <person name="Richardson P."/>
            <person name="Kozyavkin S."/>
            <person name="Weimer B.C."/>
            <person name="Mills D.A."/>
        </authorList>
    </citation>
    <scope>NUCLEOTIDE SEQUENCE [LARGE SCALE GENOMIC DNA]</scope>
    <source>
        <strain>ATCC 25745 / CCUG 21536 / LMG 10740 / 183-1w</strain>
    </source>
</reference>
<protein>
    <recommendedName>
        <fullName evidence="1">Uridylate kinase</fullName>
        <shortName evidence="1">UK</shortName>
        <ecNumber evidence="1">2.7.4.22</ecNumber>
    </recommendedName>
    <alternativeName>
        <fullName evidence="1">Uridine monophosphate kinase</fullName>
        <shortName evidence="1">UMP kinase</shortName>
        <shortName evidence="1">UMPK</shortName>
    </alternativeName>
</protein>
<feature type="chain" id="PRO_1000053972" description="Uridylate kinase">
    <location>
        <begin position="1"/>
        <end position="241"/>
    </location>
</feature>
<feature type="region of interest" description="Involved in allosteric activation by GTP" evidence="1">
    <location>
        <begin position="20"/>
        <end position="25"/>
    </location>
</feature>
<feature type="binding site" evidence="1">
    <location>
        <begin position="12"/>
        <end position="15"/>
    </location>
    <ligand>
        <name>ATP</name>
        <dbReference type="ChEBI" id="CHEBI:30616"/>
    </ligand>
</feature>
<feature type="binding site" evidence="1">
    <location>
        <position position="54"/>
    </location>
    <ligand>
        <name>UMP</name>
        <dbReference type="ChEBI" id="CHEBI:57865"/>
    </ligand>
</feature>
<feature type="binding site" evidence="1">
    <location>
        <position position="55"/>
    </location>
    <ligand>
        <name>ATP</name>
        <dbReference type="ChEBI" id="CHEBI:30616"/>
    </ligand>
</feature>
<feature type="binding site" evidence="1">
    <location>
        <position position="59"/>
    </location>
    <ligand>
        <name>ATP</name>
        <dbReference type="ChEBI" id="CHEBI:30616"/>
    </ligand>
</feature>
<feature type="binding site" evidence="1">
    <location>
        <position position="74"/>
    </location>
    <ligand>
        <name>UMP</name>
        <dbReference type="ChEBI" id="CHEBI:57865"/>
    </ligand>
</feature>
<feature type="binding site" evidence="1">
    <location>
        <begin position="135"/>
        <end position="142"/>
    </location>
    <ligand>
        <name>UMP</name>
        <dbReference type="ChEBI" id="CHEBI:57865"/>
    </ligand>
</feature>
<feature type="binding site" evidence="1">
    <location>
        <position position="163"/>
    </location>
    <ligand>
        <name>ATP</name>
        <dbReference type="ChEBI" id="CHEBI:30616"/>
    </ligand>
</feature>
<feature type="binding site" evidence="1">
    <location>
        <position position="169"/>
    </location>
    <ligand>
        <name>ATP</name>
        <dbReference type="ChEBI" id="CHEBI:30616"/>
    </ligand>
</feature>
<feature type="binding site" evidence="1">
    <location>
        <position position="172"/>
    </location>
    <ligand>
        <name>ATP</name>
        <dbReference type="ChEBI" id="CHEBI:30616"/>
    </ligand>
</feature>
<proteinExistence type="inferred from homology"/>
<gene>
    <name evidence="1" type="primary">pyrH</name>
    <name type="ordered locus">PEPE_0879</name>
</gene>
<accession>Q03FT4</accession>
<comment type="function">
    <text evidence="1">Catalyzes the reversible phosphorylation of UMP to UDP.</text>
</comment>
<comment type="catalytic activity">
    <reaction evidence="1">
        <text>UMP + ATP = UDP + ADP</text>
        <dbReference type="Rhea" id="RHEA:24400"/>
        <dbReference type="ChEBI" id="CHEBI:30616"/>
        <dbReference type="ChEBI" id="CHEBI:57865"/>
        <dbReference type="ChEBI" id="CHEBI:58223"/>
        <dbReference type="ChEBI" id="CHEBI:456216"/>
        <dbReference type="EC" id="2.7.4.22"/>
    </reaction>
</comment>
<comment type="activity regulation">
    <text evidence="1">Allosterically activated by GTP. Inhibited by UTP.</text>
</comment>
<comment type="pathway">
    <text evidence="1">Pyrimidine metabolism; CTP biosynthesis via de novo pathway; UDP from UMP (UMPK route): step 1/1.</text>
</comment>
<comment type="subunit">
    <text evidence="1">Homohexamer.</text>
</comment>
<comment type="subcellular location">
    <subcellularLocation>
        <location evidence="1">Cytoplasm</location>
    </subcellularLocation>
</comment>
<comment type="similarity">
    <text evidence="1">Belongs to the UMP kinase family.</text>
</comment>
<organism>
    <name type="scientific">Pediococcus pentosaceus (strain ATCC 25745 / CCUG 21536 / LMG 10740 / 183-1w)</name>
    <dbReference type="NCBI Taxonomy" id="278197"/>
    <lineage>
        <taxon>Bacteria</taxon>
        <taxon>Bacillati</taxon>
        <taxon>Bacillota</taxon>
        <taxon>Bacilli</taxon>
        <taxon>Lactobacillales</taxon>
        <taxon>Lactobacillaceae</taxon>
        <taxon>Pediococcus</taxon>
    </lineage>
</organism>
<evidence type="ECO:0000255" key="1">
    <source>
        <dbReference type="HAMAP-Rule" id="MF_01220"/>
    </source>
</evidence>
<dbReference type="EC" id="2.7.4.22" evidence="1"/>
<dbReference type="EMBL" id="CP000422">
    <property type="protein sequence ID" value="ABJ67938.1"/>
    <property type="molecule type" value="Genomic_DNA"/>
</dbReference>
<dbReference type="RefSeq" id="WP_002833607.1">
    <property type="nucleotide sequence ID" value="NC_008525.1"/>
</dbReference>
<dbReference type="SMR" id="Q03FT4"/>
<dbReference type="STRING" id="278197.PEPE_0879"/>
<dbReference type="GeneID" id="33062712"/>
<dbReference type="KEGG" id="ppe:PEPE_0879"/>
<dbReference type="eggNOG" id="COG0528">
    <property type="taxonomic scope" value="Bacteria"/>
</dbReference>
<dbReference type="HOGENOM" id="CLU_033861_0_0_9"/>
<dbReference type="OrthoDB" id="9807458at2"/>
<dbReference type="UniPathway" id="UPA00159">
    <property type="reaction ID" value="UER00275"/>
</dbReference>
<dbReference type="Proteomes" id="UP000000773">
    <property type="component" value="Chromosome"/>
</dbReference>
<dbReference type="GO" id="GO:0005737">
    <property type="term" value="C:cytoplasm"/>
    <property type="evidence" value="ECO:0007669"/>
    <property type="project" value="UniProtKB-SubCell"/>
</dbReference>
<dbReference type="GO" id="GO:0005524">
    <property type="term" value="F:ATP binding"/>
    <property type="evidence" value="ECO:0007669"/>
    <property type="project" value="UniProtKB-KW"/>
</dbReference>
<dbReference type="GO" id="GO:0033862">
    <property type="term" value="F:UMP kinase activity"/>
    <property type="evidence" value="ECO:0007669"/>
    <property type="project" value="UniProtKB-EC"/>
</dbReference>
<dbReference type="GO" id="GO:0044210">
    <property type="term" value="P:'de novo' CTP biosynthetic process"/>
    <property type="evidence" value="ECO:0007669"/>
    <property type="project" value="UniProtKB-UniRule"/>
</dbReference>
<dbReference type="GO" id="GO:0006225">
    <property type="term" value="P:UDP biosynthetic process"/>
    <property type="evidence" value="ECO:0007669"/>
    <property type="project" value="TreeGrafter"/>
</dbReference>
<dbReference type="CDD" id="cd04254">
    <property type="entry name" value="AAK_UMPK-PyrH-Ec"/>
    <property type="match status" value="1"/>
</dbReference>
<dbReference type="FunFam" id="3.40.1160.10:FF:000001">
    <property type="entry name" value="Uridylate kinase"/>
    <property type="match status" value="1"/>
</dbReference>
<dbReference type="Gene3D" id="3.40.1160.10">
    <property type="entry name" value="Acetylglutamate kinase-like"/>
    <property type="match status" value="1"/>
</dbReference>
<dbReference type="HAMAP" id="MF_01220_B">
    <property type="entry name" value="PyrH_B"/>
    <property type="match status" value="1"/>
</dbReference>
<dbReference type="InterPro" id="IPR036393">
    <property type="entry name" value="AceGlu_kinase-like_sf"/>
</dbReference>
<dbReference type="InterPro" id="IPR001048">
    <property type="entry name" value="Asp/Glu/Uridylate_kinase"/>
</dbReference>
<dbReference type="InterPro" id="IPR011817">
    <property type="entry name" value="Uridylate_kinase"/>
</dbReference>
<dbReference type="InterPro" id="IPR015963">
    <property type="entry name" value="Uridylate_kinase_bac"/>
</dbReference>
<dbReference type="NCBIfam" id="TIGR02075">
    <property type="entry name" value="pyrH_bact"/>
    <property type="match status" value="1"/>
</dbReference>
<dbReference type="PANTHER" id="PTHR42833">
    <property type="entry name" value="URIDYLATE KINASE"/>
    <property type="match status" value="1"/>
</dbReference>
<dbReference type="PANTHER" id="PTHR42833:SF4">
    <property type="entry name" value="URIDYLATE KINASE PUMPKIN, CHLOROPLASTIC"/>
    <property type="match status" value="1"/>
</dbReference>
<dbReference type="Pfam" id="PF00696">
    <property type="entry name" value="AA_kinase"/>
    <property type="match status" value="1"/>
</dbReference>
<dbReference type="PIRSF" id="PIRSF005650">
    <property type="entry name" value="Uridylate_kin"/>
    <property type="match status" value="1"/>
</dbReference>
<dbReference type="SUPFAM" id="SSF53633">
    <property type="entry name" value="Carbamate kinase-like"/>
    <property type="match status" value="1"/>
</dbReference>
<keyword id="KW-0021">Allosteric enzyme</keyword>
<keyword id="KW-0067">ATP-binding</keyword>
<keyword id="KW-0963">Cytoplasm</keyword>
<keyword id="KW-0418">Kinase</keyword>
<keyword id="KW-0547">Nucleotide-binding</keyword>
<keyword id="KW-0665">Pyrimidine biosynthesis</keyword>
<keyword id="KW-0808">Transferase</keyword>
<sequence length="241" mass="25957">MSEVKYKRVIMKLSGEALAGDKGTGINPPVIQKVAEELRDVHDLGVQIAIVVGGGNMWRGETGEQLGMERVQADYIGMLGTVMNALALQDSLESLGVPTRVQTSIEMRQIAEPYIRRKAVRHLEKNRIVIFAAGTGSPYFSTDTTSALRAAEIGAEAILMAKNGVDGIYSADPNVDPDAVKFDELTHMDIIDKGLNVMDTTASSLSMENNIPLVVFNLNQAGNIKKVVAGENIGTTVRGEE</sequence>